<accession>Q4WQH4</accession>
<comment type="function">
    <text evidence="1">Catalyzes the dehydration of methylthioribulose-1-phosphate (MTRu-1-P) into 2,3-diketo-5-methylthiopentyl-1-phosphate (DK-MTP-1-P).</text>
</comment>
<comment type="catalytic activity">
    <reaction evidence="1">
        <text>5-(methylsulfanyl)-D-ribulose 1-phosphate = 5-methylsulfanyl-2,3-dioxopentyl phosphate + H2O</text>
        <dbReference type="Rhea" id="RHEA:15549"/>
        <dbReference type="ChEBI" id="CHEBI:15377"/>
        <dbReference type="ChEBI" id="CHEBI:58548"/>
        <dbReference type="ChEBI" id="CHEBI:58828"/>
        <dbReference type="EC" id="4.2.1.109"/>
    </reaction>
</comment>
<comment type="cofactor">
    <cofactor evidence="1">
        <name>Zn(2+)</name>
        <dbReference type="ChEBI" id="CHEBI:29105"/>
    </cofactor>
    <text evidence="1">Binds 1 zinc ion per subunit.</text>
</comment>
<comment type="pathway">
    <text evidence="1">Amino-acid biosynthesis; L-methionine biosynthesis via salvage pathway; L-methionine from S-methyl-5-thio-alpha-D-ribose 1-phosphate: step 2/6.</text>
</comment>
<comment type="subcellular location">
    <subcellularLocation>
        <location evidence="1">Cytoplasm</location>
    </subcellularLocation>
</comment>
<comment type="similarity">
    <text evidence="1">Belongs to the aldolase class II family. MtnB subfamily.</text>
</comment>
<sequence length="240" mass="27167">MAQEIEKTNNDHLVQSSDPEHPANLIPELCRKFYNWGWVTGTGGGTSIRRGDHIFIAPSGVQKELIQPHNIFVLEFPTPKYPPSDRKYIRKPLELKPSACTPLFLTAFERGAGCCIHTHSQWAVLVTLLVEREKGPDACFEISNIEQIKGIPRGKGKGMLGFFDTLRIPIIENTAFEEDLTESLEKAMDQYPDTYAVLVRRHGIYVWGDDVAKAKTQCESLDYLFQLAVEMHKLGLPWVK</sequence>
<evidence type="ECO:0000255" key="1">
    <source>
        <dbReference type="HAMAP-Rule" id="MF_03116"/>
    </source>
</evidence>
<evidence type="ECO:0000256" key="2">
    <source>
        <dbReference type="SAM" id="MobiDB-lite"/>
    </source>
</evidence>
<dbReference type="EC" id="4.2.1.109" evidence="1"/>
<dbReference type="EMBL" id="AAHF01000005">
    <property type="protein sequence ID" value="EAL89510.1"/>
    <property type="molecule type" value="Genomic_DNA"/>
</dbReference>
<dbReference type="RefSeq" id="XP_751548.1">
    <property type="nucleotide sequence ID" value="XM_746455.1"/>
</dbReference>
<dbReference type="SMR" id="Q4WQH4"/>
<dbReference type="FunCoup" id="Q4WQH4">
    <property type="interactions" value="250"/>
</dbReference>
<dbReference type="STRING" id="330879.Q4WQH4"/>
<dbReference type="EnsemblFungi" id="EAL89510">
    <property type="protein sequence ID" value="EAL89510"/>
    <property type="gene ID" value="AFUA_4G12840"/>
</dbReference>
<dbReference type="GeneID" id="3509034"/>
<dbReference type="KEGG" id="afm:AFUA_4G12840"/>
<dbReference type="VEuPathDB" id="FungiDB:Afu4g12840"/>
<dbReference type="eggNOG" id="KOG2631">
    <property type="taxonomic scope" value="Eukaryota"/>
</dbReference>
<dbReference type="HOGENOM" id="CLU_006033_4_0_1"/>
<dbReference type="InParanoid" id="Q4WQH4"/>
<dbReference type="OMA" id="WFPGTSG"/>
<dbReference type="OrthoDB" id="191080at2759"/>
<dbReference type="UniPathway" id="UPA00904">
    <property type="reaction ID" value="UER00875"/>
</dbReference>
<dbReference type="Proteomes" id="UP000002530">
    <property type="component" value="Chromosome 4"/>
</dbReference>
<dbReference type="GO" id="GO:0005737">
    <property type="term" value="C:cytoplasm"/>
    <property type="evidence" value="ECO:0000318"/>
    <property type="project" value="GO_Central"/>
</dbReference>
<dbReference type="GO" id="GO:0046570">
    <property type="term" value="F:methylthioribulose 1-phosphate dehydratase activity"/>
    <property type="evidence" value="ECO:0000318"/>
    <property type="project" value="GO_Central"/>
</dbReference>
<dbReference type="GO" id="GO:0008270">
    <property type="term" value="F:zinc ion binding"/>
    <property type="evidence" value="ECO:0007669"/>
    <property type="project" value="UniProtKB-UniRule"/>
</dbReference>
<dbReference type="GO" id="GO:0019509">
    <property type="term" value="P:L-methionine salvage from methylthioadenosine"/>
    <property type="evidence" value="ECO:0000318"/>
    <property type="project" value="GO_Central"/>
</dbReference>
<dbReference type="FunFam" id="3.40.225.10:FF:000003">
    <property type="entry name" value="Methylthioribulose-1-phosphate dehydratase"/>
    <property type="match status" value="1"/>
</dbReference>
<dbReference type="Gene3D" id="3.40.225.10">
    <property type="entry name" value="Class II aldolase/adducin N-terminal domain"/>
    <property type="match status" value="1"/>
</dbReference>
<dbReference type="HAMAP" id="MF_03116">
    <property type="entry name" value="Salvage_MtnB_euk"/>
    <property type="match status" value="1"/>
</dbReference>
<dbReference type="InterPro" id="IPR001303">
    <property type="entry name" value="Aldolase_II/adducin_N"/>
</dbReference>
<dbReference type="InterPro" id="IPR036409">
    <property type="entry name" value="Aldolase_II/adducin_N_sf"/>
</dbReference>
<dbReference type="InterPro" id="IPR017714">
    <property type="entry name" value="MethylthioRu-1-P_deHdtase_MtnB"/>
</dbReference>
<dbReference type="InterPro" id="IPR027514">
    <property type="entry name" value="Salvage_MtnB_euk"/>
</dbReference>
<dbReference type="NCBIfam" id="TIGR03328">
    <property type="entry name" value="salvage_mtnB"/>
    <property type="match status" value="1"/>
</dbReference>
<dbReference type="PANTHER" id="PTHR10640">
    <property type="entry name" value="METHYLTHIORIBULOSE-1-PHOSPHATE DEHYDRATASE"/>
    <property type="match status" value="1"/>
</dbReference>
<dbReference type="PANTHER" id="PTHR10640:SF7">
    <property type="entry name" value="METHYLTHIORIBULOSE-1-PHOSPHATE DEHYDRATASE"/>
    <property type="match status" value="1"/>
</dbReference>
<dbReference type="Pfam" id="PF00596">
    <property type="entry name" value="Aldolase_II"/>
    <property type="match status" value="1"/>
</dbReference>
<dbReference type="SMART" id="SM01007">
    <property type="entry name" value="Aldolase_II"/>
    <property type="match status" value="1"/>
</dbReference>
<dbReference type="SUPFAM" id="SSF53639">
    <property type="entry name" value="AraD/HMP-PK domain-like"/>
    <property type="match status" value="1"/>
</dbReference>
<protein>
    <recommendedName>
        <fullName evidence="1">Methylthioribulose-1-phosphate dehydratase</fullName>
        <shortName evidence="1">MTRu-1-P dehydratase</shortName>
        <ecNumber evidence="1">4.2.1.109</ecNumber>
    </recommendedName>
</protein>
<name>MTNB_ASPFU</name>
<reference key="1">
    <citation type="journal article" date="2005" name="Nature">
        <title>Genomic sequence of the pathogenic and allergenic filamentous fungus Aspergillus fumigatus.</title>
        <authorList>
            <person name="Nierman W.C."/>
            <person name="Pain A."/>
            <person name="Anderson M.J."/>
            <person name="Wortman J.R."/>
            <person name="Kim H.S."/>
            <person name="Arroyo J."/>
            <person name="Berriman M."/>
            <person name="Abe K."/>
            <person name="Archer D.B."/>
            <person name="Bermejo C."/>
            <person name="Bennett J.W."/>
            <person name="Bowyer P."/>
            <person name="Chen D."/>
            <person name="Collins M."/>
            <person name="Coulsen R."/>
            <person name="Davies R."/>
            <person name="Dyer P.S."/>
            <person name="Farman M.L."/>
            <person name="Fedorova N."/>
            <person name="Fedorova N.D."/>
            <person name="Feldblyum T.V."/>
            <person name="Fischer R."/>
            <person name="Fosker N."/>
            <person name="Fraser A."/>
            <person name="Garcia J.L."/>
            <person name="Garcia M.J."/>
            <person name="Goble A."/>
            <person name="Goldman G.H."/>
            <person name="Gomi K."/>
            <person name="Griffith-Jones S."/>
            <person name="Gwilliam R."/>
            <person name="Haas B.J."/>
            <person name="Haas H."/>
            <person name="Harris D.E."/>
            <person name="Horiuchi H."/>
            <person name="Huang J."/>
            <person name="Humphray S."/>
            <person name="Jimenez J."/>
            <person name="Keller N."/>
            <person name="Khouri H."/>
            <person name="Kitamoto K."/>
            <person name="Kobayashi T."/>
            <person name="Konzack S."/>
            <person name="Kulkarni R."/>
            <person name="Kumagai T."/>
            <person name="Lafton A."/>
            <person name="Latge J.-P."/>
            <person name="Li W."/>
            <person name="Lord A."/>
            <person name="Lu C."/>
            <person name="Majoros W.H."/>
            <person name="May G.S."/>
            <person name="Miller B.L."/>
            <person name="Mohamoud Y."/>
            <person name="Molina M."/>
            <person name="Monod M."/>
            <person name="Mouyna I."/>
            <person name="Mulligan S."/>
            <person name="Murphy L.D."/>
            <person name="O'Neil S."/>
            <person name="Paulsen I."/>
            <person name="Penalva M.A."/>
            <person name="Pertea M."/>
            <person name="Price C."/>
            <person name="Pritchard B.L."/>
            <person name="Quail M.A."/>
            <person name="Rabbinowitsch E."/>
            <person name="Rawlins N."/>
            <person name="Rajandream M.A."/>
            <person name="Reichard U."/>
            <person name="Renauld H."/>
            <person name="Robson G.D."/>
            <person name="Rodriguez de Cordoba S."/>
            <person name="Rodriguez-Pena J.M."/>
            <person name="Ronning C.M."/>
            <person name="Rutter S."/>
            <person name="Salzberg S.L."/>
            <person name="Sanchez M."/>
            <person name="Sanchez-Ferrero J.C."/>
            <person name="Saunders D."/>
            <person name="Seeger K."/>
            <person name="Squares R."/>
            <person name="Squares S."/>
            <person name="Takeuchi M."/>
            <person name="Tekaia F."/>
            <person name="Turner G."/>
            <person name="Vazquez de Aldana C.R."/>
            <person name="Weidman J."/>
            <person name="White O."/>
            <person name="Woodward J.R."/>
            <person name="Yu J.-H."/>
            <person name="Fraser C.M."/>
            <person name="Galagan J.E."/>
            <person name="Asai K."/>
            <person name="Machida M."/>
            <person name="Hall N."/>
            <person name="Barrell B.G."/>
            <person name="Denning D.W."/>
        </authorList>
    </citation>
    <scope>NUCLEOTIDE SEQUENCE [LARGE SCALE GENOMIC DNA]</scope>
    <source>
        <strain>ATCC MYA-4609 / CBS 101355 / FGSC A1100 / Af293</strain>
    </source>
</reference>
<gene>
    <name evidence="1" type="primary">mde1</name>
    <name type="ORF">AFUA_4G12840</name>
</gene>
<organism>
    <name type="scientific">Aspergillus fumigatus (strain ATCC MYA-4609 / CBS 101355 / FGSC A1100 / Af293)</name>
    <name type="common">Neosartorya fumigata</name>
    <dbReference type="NCBI Taxonomy" id="330879"/>
    <lineage>
        <taxon>Eukaryota</taxon>
        <taxon>Fungi</taxon>
        <taxon>Dikarya</taxon>
        <taxon>Ascomycota</taxon>
        <taxon>Pezizomycotina</taxon>
        <taxon>Eurotiomycetes</taxon>
        <taxon>Eurotiomycetidae</taxon>
        <taxon>Eurotiales</taxon>
        <taxon>Aspergillaceae</taxon>
        <taxon>Aspergillus</taxon>
        <taxon>Aspergillus subgen. Fumigati</taxon>
    </lineage>
</organism>
<keyword id="KW-0028">Amino-acid biosynthesis</keyword>
<keyword id="KW-0963">Cytoplasm</keyword>
<keyword id="KW-0456">Lyase</keyword>
<keyword id="KW-0479">Metal-binding</keyword>
<keyword id="KW-0486">Methionine biosynthesis</keyword>
<keyword id="KW-1185">Reference proteome</keyword>
<keyword id="KW-0862">Zinc</keyword>
<feature type="chain" id="PRO_0000393807" description="Methylthioribulose-1-phosphate dehydratase">
    <location>
        <begin position="1"/>
        <end position="240"/>
    </location>
</feature>
<feature type="region of interest" description="Disordered" evidence="2">
    <location>
        <begin position="1"/>
        <end position="20"/>
    </location>
</feature>
<feature type="compositionally biased region" description="Basic and acidic residues" evidence="2">
    <location>
        <begin position="1"/>
        <end position="10"/>
    </location>
</feature>
<feature type="active site" description="Proton donor/acceptor" evidence="1">
    <location>
        <position position="146"/>
    </location>
</feature>
<feature type="binding site" evidence="1">
    <location>
        <position position="100"/>
    </location>
    <ligand>
        <name>substrate</name>
    </ligand>
</feature>
<feature type="binding site" evidence="1">
    <location>
        <position position="117"/>
    </location>
    <ligand>
        <name>Zn(2+)</name>
        <dbReference type="ChEBI" id="CHEBI:29105"/>
    </ligand>
</feature>
<feature type="binding site" evidence="1">
    <location>
        <position position="119"/>
    </location>
    <ligand>
        <name>Zn(2+)</name>
        <dbReference type="ChEBI" id="CHEBI:29105"/>
    </ligand>
</feature>
<feature type="binding site" evidence="1">
    <location>
        <position position="202"/>
    </location>
    <ligand>
        <name>Zn(2+)</name>
        <dbReference type="ChEBI" id="CHEBI:29105"/>
    </ligand>
</feature>
<proteinExistence type="inferred from homology"/>